<protein>
    <recommendedName>
        <fullName evidence="1">Aspartate/glutamate leucyltransferase</fullName>
        <ecNumber evidence="1">2.3.2.29</ecNumber>
    </recommendedName>
</protein>
<sequence>MTQHSRDTPQFYLTAPSPCPYLPGRQERKVFTHLVGDKATDLNDLLTHGGFRRSQSIAYRPACDQCRACVSVRVIANEFRPSRNFRKVLARNSDLVGEQRSAVPTSEQYSIFRSYLDQRHRHGGMADMTVLDYAMMVEDSHVETRIIEYRRRNLSNGPNARGGELVAVALTDVLSDGLSMVYSFFDPSETTRSLGTFMILDHIARARRQGLPYVYLGYWIEGSKKMDYKSRYLPQQRLAAAGWLRVEAEGGPAPEPQE</sequence>
<keyword id="KW-0012">Acyltransferase</keyword>
<keyword id="KW-0963">Cytoplasm</keyword>
<keyword id="KW-1185">Reference proteome</keyword>
<keyword id="KW-0808">Transferase</keyword>
<gene>
    <name evidence="1" type="primary">bpt</name>
    <name type="ordered locus">BRADO4438</name>
</gene>
<proteinExistence type="inferred from homology"/>
<dbReference type="EC" id="2.3.2.29" evidence="1"/>
<dbReference type="EMBL" id="CU234118">
    <property type="protein sequence ID" value="CAL78181.1"/>
    <property type="molecule type" value="Genomic_DNA"/>
</dbReference>
<dbReference type="RefSeq" id="WP_011927295.1">
    <property type="nucleotide sequence ID" value="NC_009445.1"/>
</dbReference>
<dbReference type="SMR" id="A4YWA5"/>
<dbReference type="STRING" id="114615.BRADO4438"/>
<dbReference type="KEGG" id="bra:BRADO4438"/>
<dbReference type="eggNOG" id="COG2935">
    <property type="taxonomic scope" value="Bacteria"/>
</dbReference>
<dbReference type="HOGENOM" id="CLU_077607_1_0_5"/>
<dbReference type="OrthoDB" id="9782022at2"/>
<dbReference type="Proteomes" id="UP000001994">
    <property type="component" value="Chromosome"/>
</dbReference>
<dbReference type="GO" id="GO:0005737">
    <property type="term" value="C:cytoplasm"/>
    <property type="evidence" value="ECO:0007669"/>
    <property type="project" value="UniProtKB-SubCell"/>
</dbReference>
<dbReference type="GO" id="GO:0004057">
    <property type="term" value="F:arginyl-tRNA--protein transferase activity"/>
    <property type="evidence" value="ECO:0007669"/>
    <property type="project" value="InterPro"/>
</dbReference>
<dbReference type="GO" id="GO:0008914">
    <property type="term" value="F:leucyl-tRNA--protein transferase activity"/>
    <property type="evidence" value="ECO:0007669"/>
    <property type="project" value="UniProtKB-UniRule"/>
</dbReference>
<dbReference type="GO" id="GO:0071596">
    <property type="term" value="P:ubiquitin-dependent protein catabolic process via the N-end rule pathway"/>
    <property type="evidence" value="ECO:0007669"/>
    <property type="project" value="InterPro"/>
</dbReference>
<dbReference type="HAMAP" id="MF_00689">
    <property type="entry name" value="Bpt"/>
    <property type="match status" value="1"/>
</dbReference>
<dbReference type="InterPro" id="IPR016181">
    <property type="entry name" value="Acyl_CoA_acyltransferase"/>
</dbReference>
<dbReference type="InterPro" id="IPR017138">
    <property type="entry name" value="Asp_Glu_LeuTrfase"/>
</dbReference>
<dbReference type="InterPro" id="IPR030700">
    <property type="entry name" value="N-end_Aminoacyl_Trfase"/>
</dbReference>
<dbReference type="InterPro" id="IPR007472">
    <property type="entry name" value="N-end_Aminoacyl_Trfase_C"/>
</dbReference>
<dbReference type="InterPro" id="IPR007471">
    <property type="entry name" value="N-end_Aminoacyl_Trfase_N"/>
</dbReference>
<dbReference type="NCBIfam" id="NF002341">
    <property type="entry name" value="PRK01305.1-1"/>
    <property type="match status" value="1"/>
</dbReference>
<dbReference type="NCBIfam" id="NF002342">
    <property type="entry name" value="PRK01305.1-3"/>
    <property type="match status" value="1"/>
</dbReference>
<dbReference type="NCBIfam" id="NF002343">
    <property type="entry name" value="PRK01305.1-4"/>
    <property type="match status" value="1"/>
</dbReference>
<dbReference type="NCBIfam" id="NF002346">
    <property type="entry name" value="PRK01305.2-3"/>
    <property type="match status" value="1"/>
</dbReference>
<dbReference type="PANTHER" id="PTHR21367">
    <property type="entry name" value="ARGININE-TRNA-PROTEIN TRANSFERASE 1"/>
    <property type="match status" value="1"/>
</dbReference>
<dbReference type="PANTHER" id="PTHR21367:SF1">
    <property type="entry name" value="ARGINYL-TRNA--PROTEIN TRANSFERASE 1"/>
    <property type="match status" value="1"/>
</dbReference>
<dbReference type="Pfam" id="PF04377">
    <property type="entry name" value="ATE_C"/>
    <property type="match status" value="1"/>
</dbReference>
<dbReference type="Pfam" id="PF04376">
    <property type="entry name" value="ATE_N"/>
    <property type="match status" value="1"/>
</dbReference>
<dbReference type="PIRSF" id="PIRSF037208">
    <property type="entry name" value="ATE_pro_prd"/>
    <property type="match status" value="1"/>
</dbReference>
<dbReference type="SUPFAM" id="SSF55729">
    <property type="entry name" value="Acyl-CoA N-acyltransferases (Nat)"/>
    <property type="match status" value="1"/>
</dbReference>
<comment type="function">
    <text evidence="1">Functions in the N-end rule pathway of protein degradation where it conjugates Leu from its aminoacyl-tRNA to the N-termini of proteins containing an N-terminal aspartate or glutamate.</text>
</comment>
<comment type="catalytic activity">
    <reaction evidence="1">
        <text>N-terminal L-glutamyl-[protein] + L-leucyl-tRNA(Leu) = N-terminal L-leucyl-L-glutamyl-[protein] + tRNA(Leu) + H(+)</text>
        <dbReference type="Rhea" id="RHEA:50412"/>
        <dbReference type="Rhea" id="RHEA-COMP:9613"/>
        <dbReference type="Rhea" id="RHEA-COMP:9622"/>
        <dbReference type="Rhea" id="RHEA-COMP:12664"/>
        <dbReference type="Rhea" id="RHEA-COMP:12668"/>
        <dbReference type="ChEBI" id="CHEBI:15378"/>
        <dbReference type="ChEBI" id="CHEBI:64721"/>
        <dbReference type="ChEBI" id="CHEBI:78442"/>
        <dbReference type="ChEBI" id="CHEBI:78494"/>
        <dbReference type="ChEBI" id="CHEBI:133041"/>
        <dbReference type="EC" id="2.3.2.29"/>
    </reaction>
</comment>
<comment type="catalytic activity">
    <reaction evidence="1">
        <text>N-terminal L-aspartyl-[protein] + L-leucyl-tRNA(Leu) = N-terminal L-leucyl-L-aspartyl-[protein] + tRNA(Leu) + H(+)</text>
        <dbReference type="Rhea" id="RHEA:50420"/>
        <dbReference type="Rhea" id="RHEA-COMP:9613"/>
        <dbReference type="Rhea" id="RHEA-COMP:9622"/>
        <dbReference type="Rhea" id="RHEA-COMP:12669"/>
        <dbReference type="Rhea" id="RHEA-COMP:12674"/>
        <dbReference type="ChEBI" id="CHEBI:15378"/>
        <dbReference type="ChEBI" id="CHEBI:64720"/>
        <dbReference type="ChEBI" id="CHEBI:78442"/>
        <dbReference type="ChEBI" id="CHEBI:78494"/>
        <dbReference type="ChEBI" id="CHEBI:133042"/>
        <dbReference type="EC" id="2.3.2.29"/>
    </reaction>
</comment>
<comment type="subcellular location">
    <subcellularLocation>
        <location evidence="1">Cytoplasm</location>
    </subcellularLocation>
</comment>
<comment type="similarity">
    <text evidence="1">Belongs to the R-transferase family. Bpt subfamily.</text>
</comment>
<organism>
    <name type="scientific">Bradyrhizobium sp. (strain ORS 278)</name>
    <dbReference type="NCBI Taxonomy" id="114615"/>
    <lineage>
        <taxon>Bacteria</taxon>
        <taxon>Pseudomonadati</taxon>
        <taxon>Pseudomonadota</taxon>
        <taxon>Alphaproteobacteria</taxon>
        <taxon>Hyphomicrobiales</taxon>
        <taxon>Nitrobacteraceae</taxon>
        <taxon>Bradyrhizobium</taxon>
    </lineage>
</organism>
<name>BPT_BRASO</name>
<accession>A4YWA5</accession>
<reference key="1">
    <citation type="journal article" date="2007" name="Science">
        <title>Legumes symbioses: absence of nod genes in photosynthetic bradyrhizobia.</title>
        <authorList>
            <person name="Giraud E."/>
            <person name="Moulin L."/>
            <person name="Vallenet D."/>
            <person name="Barbe V."/>
            <person name="Cytryn E."/>
            <person name="Avarre J.-C."/>
            <person name="Jaubert M."/>
            <person name="Simon D."/>
            <person name="Cartieaux F."/>
            <person name="Prin Y."/>
            <person name="Bena G."/>
            <person name="Hannibal L."/>
            <person name="Fardoux J."/>
            <person name="Kojadinovic M."/>
            <person name="Vuillet L."/>
            <person name="Lajus A."/>
            <person name="Cruveiller S."/>
            <person name="Rouy Z."/>
            <person name="Mangenot S."/>
            <person name="Segurens B."/>
            <person name="Dossat C."/>
            <person name="Franck W.L."/>
            <person name="Chang W.-S."/>
            <person name="Saunders E."/>
            <person name="Bruce D."/>
            <person name="Richardson P."/>
            <person name="Normand P."/>
            <person name="Dreyfus B."/>
            <person name="Pignol D."/>
            <person name="Stacey G."/>
            <person name="Emerich D."/>
            <person name="Vermeglio A."/>
            <person name="Medigue C."/>
            <person name="Sadowsky M."/>
        </authorList>
    </citation>
    <scope>NUCLEOTIDE SEQUENCE [LARGE SCALE GENOMIC DNA]</scope>
    <source>
        <strain>ORS 278</strain>
    </source>
</reference>
<evidence type="ECO:0000255" key="1">
    <source>
        <dbReference type="HAMAP-Rule" id="MF_00689"/>
    </source>
</evidence>
<feature type="chain" id="PRO_1000045122" description="Aspartate/glutamate leucyltransferase">
    <location>
        <begin position="1"/>
        <end position="258"/>
    </location>
</feature>